<reference key="1">
    <citation type="submission" date="2004-08" db="EMBL/GenBank/DDBJ databases">
        <authorList>
            <consortium name="NIH - Xenopus Gene Collection (XGC) project"/>
        </authorList>
    </citation>
    <scope>NUCLEOTIDE SEQUENCE [LARGE SCALE MRNA]</scope>
    <source>
        <tissue>Embryo</tissue>
    </source>
</reference>
<sequence length="131" mass="15038">MDFQQLADVADKWCSNTPFDLIATEETERRMDFYADPGVSFYVLCPESGCGDHFHVWSESEDCLPFLQLAQDYISSCGKKTLHEILEKVFKSFRPLLGLPDVDDDTFEEYNADVEEEEPEADHQQMGVSQQ</sequence>
<dbReference type="EMBL" id="BC080370">
    <property type="protein sequence ID" value="AAH80370.1"/>
    <property type="status" value="ALT_INIT"/>
    <property type="molecule type" value="mRNA"/>
</dbReference>
<dbReference type="RefSeq" id="NP_001007923.2">
    <property type="nucleotide sequence ID" value="NM_001007922.2"/>
</dbReference>
<dbReference type="SMR" id="Q66KJ5"/>
<dbReference type="FunCoup" id="Q66KJ5">
    <property type="interactions" value="628"/>
</dbReference>
<dbReference type="STRING" id="8364.ENSXETP00000024698"/>
<dbReference type="PaxDb" id="8364-ENSXETP00000047640"/>
<dbReference type="DNASU" id="493304"/>
<dbReference type="GeneID" id="493304"/>
<dbReference type="KEGG" id="xtr:493304"/>
<dbReference type="AGR" id="Xenbase:XB-GENE-945483"/>
<dbReference type="CTD" id="222166"/>
<dbReference type="Xenbase" id="XB-GENE-945483">
    <property type="gene designation" value="mturn"/>
</dbReference>
<dbReference type="eggNOG" id="ENOG502RXQA">
    <property type="taxonomic scope" value="Eukaryota"/>
</dbReference>
<dbReference type="HOGENOM" id="CLU_163056_0_0_1"/>
<dbReference type="InParanoid" id="Q66KJ5"/>
<dbReference type="OMA" id="YEQYHAD"/>
<dbReference type="OrthoDB" id="9922400at2759"/>
<dbReference type="PhylomeDB" id="Q66KJ5"/>
<dbReference type="TreeFam" id="TF332814"/>
<dbReference type="Proteomes" id="UP000008143">
    <property type="component" value="Chromosome 6"/>
</dbReference>
<dbReference type="GO" id="GO:0005737">
    <property type="term" value="C:cytoplasm"/>
    <property type="evidence" value="ECO:0000250"/>
    <property type="project" value="UniProtKB"/>
</dbReference>
<dbReference type="GO" id="GO:0030154">
    <property type="term" value="P:cell differentiation"/>
    <property type="evidence" value="ECO:0007669"/>
    <property type="project" value="UniProtKB-KW"/>
</dbReference>
<dbReference type="GO" id="GO:0045654">
    <property type="term" value="P:positive regulation of megakaryocyte differentiation"/>
    <property type="evidence" value="ECO:0000250"/>
    <property type="project" value="UniProtKB"/>
</dbReference>
<dbReference type="GO" id="GO:0051726">
    <property type="term" value="P:regulation of cell cycle"/>
    <property type="evidence" value="ECO:0007669"/>
    <property type="project" value="UniProtKB-KW"/>
</dbReference>
<dbReference type="InterPro" id="IPR027892">
    <property type="entry name" value="Maturin"/>
</dbReference>
<dbReference type="PANTHER" id="PTHR32008">
    <property type="entry name" value="MATURIN"/>
    <property type="match status" value="1"/>
</dbReference>
<dbReference type="PANTHER" id="PTHR32008:SF2">
    <property type="entry name" value="MATURIN"/>
    <property type="match status" value="1"/>
</dbReference>
<dbReference type="Pfam" id="PF15167">
    <property type="entry name" value="DUF4581"/>
    <property type="match status" value="1"/>
</dbReference>
<proteinExistence type="evidence at transcript level"/>
<keyword id="KW-0131">Cell cycle</keyword>
<keyword id="KW-0963">Cytoplasm</keyword>
<keyword id="KW-0217">Developmental protein</keyword>
<keyword id="KW-0221">Differentiation</keyword>
<keyword id="KW-0338">Growth arrest</keyword>
<keyword id="KW-1185">Reference proteome</keyword>
<name>MTURN_XENTR</name>
<gene>
    <name type="primary">mturn</name>
</gene>
<accession>Q66KJ5</accession>
<protein>
    <recommendedName>
        <fullName>Maturin</fullName>
    </recommendedName>
    <alternativeName>
        <fullName>Maturin neural progenitor differentiation regulator protein</fullName>
    </alternativeName>
</protein>
<feature type="chain" id="PRO_0000294237" description="Maturin">
    <location>
        <begin position="1"/>
        <end position="131"/>
    </location>
</feature>
<feature type="region of interest" description="Disordered" evidence="3">
    <location>
        <begin position="107"/>
        <end position="131"/>
    </location>
</feature>
<feature type="compositionally biased region" description="Acidic residues" evidence="3">
    <location>
        <begin position="107"/>
        <end position="120"/>
    </location>
</feature>
<comment type="function">
    <text evidence="1 2">Involved in early neuronal development; required for cell cycle exit and differentiation of primary neurons (By similarity). Cooperates synergistically with pak3 to promote primary neural differentiation within the neural plate (By similarity). May play a role in promoting megakaryocyte differentiation (By similarity).</text>
</comment>
<comment type="subcellular location">
    <subcellularLocation>
        <location evidence="2">Cytoplasm</location>
    </subcellularLocation>
</comment>
<comment type="similarity">
    <text evidence="4">Belongs to the MTURN family.</text>
</comment>
<comment type="sequence caution" evidence="4">
    <conflict type="erroneous initiation">
        <sequence resource="EMBL-CDS" id="AAH80370"/>
    </conflict>
    <text>Truncated N-terminus.</text>
</comment>
<organism>
    <name type="scientific">Xenopus tropicalis</name>
    <name type="common">Western clawed frog</name>
    <name type="synonym">Silurana tropicalis</name>
    <dbReference type="NCBI Taxonomy" id="8364"/>
    <lineage>
        <taxon>Eukaryota</taxon>
        <taxon>Metazoa</taxon>
        <taxon>Chordata</taxon>
        <taxon>Craniata</taxon>
        <taxon>Vertebrata</taxon>
        <taxon>Euteleostomi</taxon>
        <taxon>Amphibia</taxon>
        <taxon>Batrachia</taxon>
        <taxon>Anura</taxon>
        <taxon>Pipoidea</taxon>
        <taxon>Pipidae</taxon>
        <taxon>Xenopodinae</taxon>
        <taxon>Xenopus</taxon>
        <taxon>Silurana</taxon>
    </lineage>
</organism>
<evidence type="ECO:0000250" key="1">
    <source>
        <dbReference type="UniProtKB" id="Q7ZX36"/>
    </source>
</evidence>
<evidence type="ECO:0000250" key="2">
    <source>
        <dbReference type="UniProtKB" id="Q8N3F0"/>
    </source>
</evidence>
<evidence type="ECO:0000256" key="3">
    <source>
        <dbReference type="SAM" id="MobiDB-lite"/>
    </source>
</evidence>
<evidence type="ECO:0000305" key="4"/>